<dbReference type="EMBL" id="CU329672">
    <property type="protein sequence ID" value="CCD31389.1"/>
    <property type="molecule type" value="Genomic_DNA"/>
</dbReference>
<dbReference type="RefSeq" id="XP_004001739.1">
    <property type="nucleotide sequence ID" value="XM_004001690.1"/>
</dbReference>
<dbReference type="PaxDb" id="4896-SPCC1235.17.1"/>
<dbReference type="EnsemblFungi" id="SPCC1235.17.1">
    <property type="protein sequence ID" value="SPCC1235.17.1:pep"/>
    <property type="gene ID" value="SPCC1235.17"/>
</dbReference>
<dbReference type="PomBase" id="SPCC1235.17"/>
<dbReference type="VEuPathDB" id="FungiDB:SPCC1235.17"/>
<dbReference type="HOGENOM" id="CLU_1741642_0_0_1"/>
<dbReference type="InParanoid" id="G2TRT7"/>
<dbReference type="PRO" id="PR:G2TRT7"/>
<dbReference type="Proteomes" id="UP000002485">
    <property type="component" value="Chromosome III"/>
</dbReference>
<dbReference type="GO" id="GO:0016020">
    <property type="term" value="C:membrane"/>
    <property type="evidence" value="ECO:0007669"/>
    <property type="project" value="UniProtKB-SubCell"/>
</dbReference>
<keyword id="KW-0472">Membrane</keyword>
<keyword id="KW-1185">Reference proteome</keyword>
<keyword id="KW-0812">Transmembrane</keyword>
<keyword id="KW-1133">Transmembrane helix</keyword>
<feature type="chain" id="PRO_0000416624" description="Putative uncharacterized transmembrane protein C1235.17">
    <location>
        <begin position="1"/>
        <end position="150"/>
    </location>
</feature>
<feature type="transmembrane region" description="Helical" evidence="1">
    <location>
        <begin position="50"/>
        <end position="70"/>
    </location>
</feature>
<feature type="transmembrane region" description="Helical" evidence="1">
    <location>
        <begin position="80"/>
        <end position="100"/>
    </location>
</feature>
<feature type="transmembrane region" description="Helical" evidence="1">
    <location>
        <begin position="127"/>
        <end position="147"/>
    </location>
</feature>
<proteinExistence type="predicted"/>
<sequence>MGRCGTHTQINFLAGFVVRFNNVKTCLAQFWVNMGQNKEGNADKSSYFKVVSVILTLRGYVQLGYMVIHLVTHTLHCITLYITITHYTIYIVNIVIQLWLYRYIERFFYSLLVEYCENLCDSKEKRKVVIRFYFHFYFFFSFLFFIEKKK</sequence>
<gene>
    <name type="ORF">SPCC1235.17</name>
</gene>
<reference key="1">
    <citation type="journal article" date="2002" name="Nature">
        <title>The genome sequence of Schizosaccharomyces pombe.</title>
        <authorList>
            <person name="Wood V."/>
            <person name="Gwilliam R."/>
            <person name="Rajandream M.A."/>
            <person name="Lyne M.H."/>
            <person name="Lyne R."/>
            <person name="Stewart A."/>
            <person name="Sgouros J.G."/>
            <person name="Peat N."/>
            <person name="Hayles J."/>
            <person name="Baker S.G."/>
            <person name="Basham D."/>
            <person name="Bowman S."/>
            <person name="Brooks K."/>
            <person name="Brown D."/>
            <person name="Brown S."/>
            <person name="Chillingworth T."/>
            <person name="Churcher C.M."/>
            <person name="Collins M."/>
            <person name="Connor R."/>
            <person name="Cronin A."/>
            <person name="Davis P."/>
            <person name="Feltwell T."/>
            <person name="Fraser A."/>
            <person name="Gentles S."/>
            <person name="Goble A."/>
            <person name="Hamlin N."/>
            <person name="Harris D.E."/>
            <person name="Hidalgo J."/>
            <person name="Hodgson G."/>
            <person name="Holroyd S."/>
            <person name="Hornsby T."/>
            <person name="Howarth S."/>
            <person name="Huckle E.J."/>
            <person name="Hunt S."/>
            <person name="Jagels K."/>
            <person name="James K.D."/>
            <person name="Jones L."/>
            <person name="Jones M."/>
            <person name="Leather S."/>
            <person name="McDonald S."/>
            <person name="McLean J."/>
            <person name="Mooney P."/>
            <person name="Moule S."/>
            <person name="Mungall K.L."/>
            <person name="Murphy L.D."/>
            <person name="Niblett D."/>
            <person name="Odell C."/>
            <person name="Oliver K."/>
            <person name="O'Neil S."/>
            <person name="Pearson D."/>
            <person name="Quail M.A."/>
            <person name="Rabbinowitsch E."/>
            <person name="Rutherford K.M."/>
            <person name="Rutter S."/>
            <person name="Saunders D."/>
            <person name="Seeger K."/>
            <person name="Sharp S."/>
            <person name="Skelton J."/>
            <person name="Simmonds M.N."/>
            <person name="Squares R."/>
            <person name="Squares S."/>
            <person name="Stevens K."/>
            <person name="Taylor K."/>
            <person name="Taylor R.G."/>
            <person name="Tivey A."/>
            <person name="Walsh S.V."/>
            <person name="Warren T."/>
            <person name="Whitehead S."/>
            <person name="Woodward J.R."/>
            <person name="Volckaert G."/>
            <person name="Aert R."/>
            <person name="Robben J."/>
            <person name="Grymonprez B."/>
            <person name="Weltjens I."/>
            <person name="Vanstreels E."/>
            <person name="Rieger M."/>
            <person name="Schaefer M."/>
            <person name="Mueller-Auer S."/>
            <person name="Gabel C."/>
            <person name="Fuchs M."/>
            <person name="Duesterhoeft A."/>
            <person name="Fritzc C."/>
            <person name="Holzer E."/>
            <person name="Moestl D."/>
            <person name="Hilbert H."/>
            <person name="Borzym K."/>
            <person name="Langer I."/>
            <person name="Beck A."/>
            <person name="Lehrach H."/>
            <person name="Reinhardt R."/>
            <person name="Pohl T.M."/>
            <person name="Eger P."/>
            <person name="Zimmermann W."/>
            <person name="Wedler H."/>
            <person name="Wambutt R."/>
            <person name="Purnelle B."/>
            <person name="Goffeau A."/>
            <person name="Cadieu E."/>
            <person name="Dreano S."/>
            <person name="Gloux S."/>
            <person name="Lelaure V."/>
            <person name="Mottier S."/>
            <person name="Galibert F."/>
            <person name="Aves S.J."/>
            <person name="Xiang Z."/>
            <person name="Hunt C."/>
            <person name="Moore K."/>
            <person name="Hurst S.M."/>
            <person name="Lucas M."/>
            <person name="Rochet M."/>
            <person name="Gaillardin C."/>
            <person name="Tallada V.A."/>
            <person name="Garzon A."/>
            <person name="Thode G."/>
            <person name="Daga R.R."/>
            <person name="Cruzado L."/>
            <person name="Jimenez J."/>
            <person name="Sanchez M."/>
            <person name="del Rey F."/>
            <person name="Benito J."/>
            <person name="Dominguez A."/>
            <person name="Revuelta J.L."/>
            <person name="Moreno S."/>
            <person name="Armstrong J."/>
            <person name="Forsburg S.L."/>
            <person name="Cerutti L."/>
            <person name="Lowe T."/>
            <person name="McCombie W.R."/>
            <person name="Paulsen I."/>
            <person name="Potashkin J."/>
            <person name="Shpakovski G.V."/>
            <person name="Ussery D."/>
            <person name="Barrell B.G."/>
            <person name="Nurse P."/>
        </authorList>
    </citation>
    <scope>NUCLEOTIDE SEQUENCE [LARGE SCALE GENOMIC DNA]</scope>
    <source>
        <strain>972 / ATCC 24843</strain>
    </source>
</reference>
<reference key="2">
    <citation type="journal article" date="2011" name="Science">
        <title>Comparative functional genomics of the fission yeasts.</title>
        <authorList>
            <person name="Rhind N."/>
            <person name="Chen Z."/>
            <person name="Yassour M."/>
            <person name="Thompson D.A."/>
            <person name="Haas B.J."/>
            <person name="Habib N."/>
            <person name="Wapinski I."/>
            <person name="Roy S."/>
            <person name="Lin M.F."/>
            <person name="Heiman D.I."/>
            <person name="Young S.K."/>
            <person name="Furuya K."/>
            <person name="Guo Y."/>
            <person name="Pidoux A."/>
            <person name="Chen H.M."/>
            <person name="Robbertse B."/>
            <person name="Goldberg J.M."/>
            <person name="Aoki K."/>
            <person name="Bayne E.H."/>
            <person name="Berlin A.M."/>
            <person name="Desjardins C.A."/>
            <person name="Dobbs E."/>
            <person name="Dukaj L."/>
            <person name="Fan L."/>
            <person name="FitzGerald M.G."/>
            <person name="French C."/>
            <person name="Gujja S."/>
            <person name="Hansen K."/>
            <person name="Keifenheim D."/>
            <person name="Levin J.Z."/>
            <person name="Mosher R.A."/>
            <person name="Mueller C.A."/>
            <person name="Pfiffner J."/>
            <person name="Priest M."/>
            <person name="Russ C."/>
            <person name="Smialowska A."/>
            <person name="Swoboda P."/>
            <person name="Sykes S.M."/>
            <person name="Vaughn M."/>
            <person name="Vengrova S."/>
            <person name="Yoder R."/>
            <person name="Zeng Q."/>
            <person name="Allshire R."/>
            <person name="Baulcombe D."/>
            <person name="Birren B.W."/>
            <person name="Brown W."/>
            <person name="Ekwall K."/>
            <person name="Kellis M."/>
            <person name="Leatherwood J."/>
            <person name="Levin H."/>
            <person name="Margalit H."/>
            <person name="Martienssen R."/>
            <person name="Nieduszynski C.A."/>
            <person name="Spatafora J.W."/>
            <person name="Friedman N."/>
            <person name="Dalgaard J.Z."/>
            <person name="Baumann P."/>
            <person name="Niki H."/>
            <person name="Regev A."/>
            <person name="Nusbaum C."/>
        </authorList>
    </citation>
    <scope>IDENTIFICATION</scope>
</reference>
<protein>
    <recommendedName>
        <fullName>Putative uncharacterized transmembrane protein C1235.17</fullName>
    </recommendedName>
</protein>
<accession>G2TRT7</accession>
<organism>
    <name type="scientific">Schizosaccharomyces pombe (strain 972 / ATCC 24843)</name>
    <name type="common">Fission yeast</name>
    <dbReference type="NCBI Taxonomy" id="284812"/>
    <lineage>
        <taxon>Eukaryota</taxon>
        <taxon>Fungi</taxon>
        <taxon>Dikarya</taxon>
        <taxon>Ascomycota</taxon>
        <taxon>Taphrinomycotina</taxon>
        <taxon>Schizosaccharomycetes</taxon>
        <taxon>Schizosaccharomycetales</taxon>
        <taxon>Schizosaccharomycetaceae</taxon>
        <taxon>Schizosaccharomyces</taxon>
    </lineage>
</organism>
<name>YCYH_SCHPO</name>
<evidence type="ECO:0000255" key="1"/>
<evidence type="ECO:0000305" key="2"/>
<comment type="subcellular location">
    <subcellularLocation>
        <location evidence="2">Membrane</location>
        <topology evidence="2">Multi-pass membrane protein</topology>
    </subcellularLocation>
</comment>